<reference key="1">
    <citation type="journal article" date="2001" name="Plant Cell">
        <title>Functional genomic analysis of the HY2 family of ferredoxin-dependent bilin reductases from oxygenic photosynthetic organisms.</title>
        <authorList>
            <person name="Frankenberg N."/>
            <person name="Mukougawa K."/>
            <person name="Kohchi T."/>
            <person name="Lagarias J.C."/>
        </authorList>
    </citation>
    <scope>NUCLEOTIDE SEQUENCE [GENOMIC DNA]</scope>
</reference>
<reference key="2">
    <citation type="journal article" date="2001" name="DNA Res.">
        <title>Complete genomic sequence of the filamentous nitrogen-fixing cyanobacterium Anabaena sp. strain PCC 7120.</title>
        <authorList>
            <person name="Kaneko T."/>
            <person name="Nakamura Y."/>
            <person name="Wolk C.P."/>
            <person name="Kuritz T."/>
            <person name="Sasamoto S."/>
            <person name="Watanabe A."/>
            <person name="Iriguchi M."/>
            <person name="Ishikawa A."/>
            <person name="Kawashima K."/>
            <person name="Kimura T."/>
            <person name="Kishida Y."/>
            <person name="Kohara M."/>
            <person name="Matsumoto M."/>
            <person name="Matsuno A."/>
            <person name="Muraki A."/>
            <person name="Nakazaki N."/>
            <person name="Shimpo S."/>
            <person name="Sugimoto M."/>
            <person name="Takazawa M."/>
            <person name="Yamada M."/>
            <person name="Yasuda M."/>
            <person name="Tabata S."/>
        </authorList>
    </citation>
    <scope>NUCLEOTIDE SEQUENCE [LARGE SCALE GENOMIC DNA]</scope>
    <source>
        <strain>PCC 7120 / SAG 25.82 / UTEX 2576</strain>
    </source>
</reference>
<reference key="3">
    <citation type="journal article" date="2006" name="J. Biol. Chem.">
        <title>Chromophore attachment to phycobiliprotein beta-subunits: phycocyanobilin:cysteine-beta84 phycobiliprotein lyase activity of CpeS-like protein from Anabaena Sp. PCC7120.</title>
        <authorList>
            <person name="Zhao K.H."/>
            <person name="Su P."/>
            <person name="Li J."/>
            <person name="Tu J.M."/>
            <person name="Zhou M."/>
            <person name="Bubenzer C."/>
            <person name="Scheer H."/>
        </authorList>
    </citation>
    <scope>FUNCTION</scope>
    <source>
        <strain>PCC 7120 / SAG 25.82 / UTEX 2576</strain>
    </source>
</reference>
<reference key="4">
    <citation type="journal article" date="2007" name="Biochemistry">
        <title>Insight into the radical mechanism of phycocyanobilin-ferredoxin oxidoreductase (PcyA) revealed by X-ray crystallography and biochemical measurements.</title>
        <authorList>
            <person name="Tu S.L."/>
            <person name="Rockwell N.C."/>
            <person name="Lagarias J.C."/>
            <person name="Fisher A.J."/>
        </authorList>
    </citation>
    <scope>X-RAY CRYSTALLOGRAPHY (2.5 ANGSTROMS) OF 2-245</scope>
    <scope>CATALYTIC ACTIVITY</scope>
    <scope>MUTAGENESIS OF HIS-71 AND GLU-73</scope>
    <source>
        <strain>PCC 7120 / SAG 25.82 / UTEX 2576</strain>
    </source>
</reference>
<gene>
    <name type="primary">pcyA</name>
    <name type="ordered locus">alr3707</name>
</gene>
<protein>
    <recommendedName>
        <fullName>Phycocyanobilin:ferredoxin oxidoreductase</fullName>
        <shortName>PCB:ferredoxin oxidoreductase</shortName>
        <ecNumber>1.3.7.5</ecNumber>
    </recommendedName>
</protein>
<dbReference type="EC" id="1.3.7.5"/>
<dbReference type="EMBL" id="AF339056">
    <property type="protein sequence ID" value="AAK38587.1"/>
    <property type="molecule type" value="Genomic_DNA"/>
</dbReference>
<dbReference type="EMBL" id="BA000019">
    <property type="protein sequence ID" value="BAB75406.1"/>
    <property type="molecule type" value="Genomic_DNA"/>
</dbReference>
<dbReference type="PIR" id="AD2269">
    <property type="entry name" value="AD2269"/>
</dbReference>
<dbReference type="RefSeq" id="WP_010997850.1">
    <property type="nucleotide sequence ID" value="NZ_RSCN01000007.1"/>
</dbReference>
<dbReference type="PDB" id="2G18">
    <property type="method" value="X-ray"/>
    <property type="resolution" value="2.50 A"/>
    <property type="chains" value="A/B/C/D/E/F/G/H/I/J/K/L=2-245"/>
</dbReference>
<dbReference type="PDBsum" id="2G18"/>
<dbReference type="SMR" id="Q93TN0"/>
<dbReference type="STRING" id="103690.gene:10495749"/>
<dbReference type="KEGG" id="ana:alr3707"/>
<dbReference type="eggNOG" id="ENOG502Z7RN">
    <property type="taxonomic scope" value="Bacteria"/>
</dbReference>
<dbReference type="OrthoDB" id="581340at2"/>
<dbReference type="BioCyc" id="MetaCyc:MONOMER-18997"/>
<dbReference type="BRENDA" id="1.3.7.5">
    <property type="organism ID" value="8113"/>
</dbReference>
<dbReference type="EvolutionaryTrace" id="Q93TN0"/>
<dbReference type="Proteomes" id="UP000002483">
    <property type="component" value="Chromosome"/>
</dbReference>
<dbReference type="GO" id="GO:0050897">
    <property type="term" value="F:cobalt ion binding"/>
    <property type="evidence" value="ECO:0007669"/>
    <property type="project" value="InterPro"/>
</dbReference>
<dbReference type="GO" id="GO:0050620">
    <property type="term" value="F:phycocyanobilin:ferredoxin oxidoreductase activity"/>
    <property type="evidence" value="ECO:0007669"/>
    <property type="project" value="UniProtKB-UniRule"/>
</dbReference>
<dbReference type="GO" id="GO:0010024">
    <property type="term" value="P:phytochromobilin biosynthetic process"/>
    <property type="evidence" value="ECO:0007669"/>
    <property type="project" value="InterPro"/>
</dbReference>
<dbReference type="Gene3D" id="3.40.1500.20">
    <property type="match status" value="1"/>
</dbReference>
<dbReference type="HAMAP" id="MF_00618">
    <property type="entry name" value="Ferredoxin_bilin_red"/>
    <property type="match status" value="1"/>
</dbReference>
<dbReference type="InterPro" id="IPR009249">
    <property type="entry name" value="Ferredoxin-dep_bilin_Rdtase"/>
</dbReference>
<dbReference type="InterPro" id="IPR022870">
    <property type="entry name" value="Ferredoxin_bilin_OxRdtase"/>
</dbReference>
<dbReference type="NCBIfam" id="NF002760">
    <property type="entry name" value="PRK02816.1"/>
    <property type="match status" value="1"/>
</dbReference>
<dbReference type="PANTHER" id="PTHR34557">
    <property type="entry name" value="PHYTOCHROMOBILIN:FERREDOXIN OXIDOREDUCTASE, CHLOROPLASTIC"/>
    <property type="match status" value="1"/>
</dbReference>
<dbReference type="PANTHER" id="PTHR34557:SF1">
    <property type="entry name" value="PHYTOCHROMOBILIN:FERREDOXIN OXIDOREDUCTASE, CHLOROPLASTIC"/>
    <property type="match status" value="1"/>
</dbReference>
<dbReference type="Pfam" id="PF05996">
    <property type="entry name" value="Fe_bilin_red"/>
    <property type="match status" value="1"/>
</dbReference>
<sequence length="245" mass="27959">MSLTSIPSLREQQHPLIRQLADCIEEVWHQHLDLSPYHLPAELGYVEGRLEGEKLTIENRCYQTPQFRKMHLELAKVGNMLDILHCVMFPRPEYDLPMFGCDLVGGRGQISAAIADLSPVHLDRTLPESYNSALTSLNTLNFSQPRELPEWGNIFSDFCIFVRPSSPEEEAMFLGRVREFLQVHCQGAIAASPVSAEQKQQILAGQHNYCSKQQQNDKTRRVLEKAFGVDWAENYMTTVLFDLPE</sequence>
<comment type="function">
    <text evidence="1">Catalyzes the four-electron reduction of biliverdin IX-alpha (2-electron reduction at both the A and D rings); the reaction proceeds via an isolatable 2-electron intermediate, 181,182-dihydrobiliverdin. Upon overexpression in E.coli with PCB:ferredoxin oxidoreductase, CpeS and either CpcB or PecB permits synthesis of phycocyanin-coupled CpcB or PecB.</text>
</comment>
<comment type="catalytic activity">
    <reaction evidence="2">
        <text>(2R,3Z)-phycocyanobilin + 4 oxidized [2Fe-2S]-[ferredoxin] = biliverdin IXalpha + 4 reduced [2Fe-2S]-[ferredoxin] + 4 H(+)</text>
        <dbReference type="Rhea" id="RHEA:15309"/>
        <dbReference type="Rhea" id="RHEA-COMP:10000"/>
        <dbReference type="Rhea" id="RHEA-COMP:10001"/>
        <dbReference type="ChEBI" id="CHEBI:15378"/>
        <dbReference type="ChEBI" id="CHEBI:33737"/>
        <dbReference type="ChEBI" id="CHEBI:33738"/>
        <dbReference type="ChEBI" id="CHEBI:57437"/>
        <dbReference type="ChEBI" id="CHEBI:57991"/>
        <dbReference type="EC" id="1.3.7.5"/>
    </reaction>
</comment>
<comment type="similarity">
    <text evidence="3">Belongs to the HY2 family.</text>
</comment>
<organism>
    <name type="scientific">Nostoc sp. (strain PCC 7120 / SAG 25.82 / UTEX 2576)</name>
    <dbReference type="NCBI Taxonomy" id="103690"/>
    <lineage>
        <taxon>Bacteria</taxon>
        <taxon>Bacillati</taxon>
        <taxon>Cyanobacteriota</taxon>
        <taxon>Cyanophyceae</taxon>
        <taxon>Nostocales</taxon>
        <taxon>Nostocaceae</taxon>
        <taxon>Nostoc</taxon>
    </lineage>
</organism>
<proteinExistence type="evidence at protein level"/>
<accession>Q93TN0</accession>
<feature type="chain" id="PRO_0000216738" description="Phycocyanobilin:ferredoxin oxidoreductase">
    <location>
        <begin position="1"/>
        <end position="245"/>
    </location>
</feature>
<feature type="mutagenesis site" description="Has 5% bilin reductase activity." evidence="2">
    <original>H</original>
    <variation>Q</variation>
    <location>
        <position position="71"/>
    </location>
</feature>
<feature type="mutagenesis site" description="Has 20% bilin reductase activity, only the two-electron reduction of the A ring occurs." evidence="2">
    <original>E</original>
    <variation>Q</variation>
    <location>
        <position position="73"/>
    </location>
</feature>
<feature type="helix" evidence="4">
    <location>
        <begin position="9"/>
        <end position="12"/>
    </location>
</feature>
<feature type="helix" evidence="4">
    <location>
        <begin position="15"/>
        <end position="31"/>
    </location>
</feature>
<feature type="helix" evidence="4">
    <location>
        <begin position="41"/>
        <end position="43"/>
    </location>
</feature>
<feature type="strand" evidence="4">
    <location>
        <begin position="44"/>
        <end position="50"/>
    </location>
</feature>
<feature type="strand" evidence="4">
    <location>
        <begin position="53"/>
        <end position="63"/>
    </location>
</feature>
<feature type="strand" evidence="4">
    <location>
        <begin position="65"/>
        <end position="77"/>
    </location>
</feature>
<feature type="turn" evidence="4">
    <location>
        <begin position="78"/>
        <end position="80"/>
    </location>
</feature>
<feature type="strand" evidence="4">
    <location>
        <begin position="81"/>
        <end position="90"/>
    </location>
</feature>
<feature type="strand" evidence="4">
    <location>
        <begin position="98"/>
        <end position="106"/>
    </location>
</feature>
<feature type="strand" evidence="4">
    <location>
        <begin position="109"/>
        <end position="118"/>
    </location>
</feature>
<feature type="helix" evidence="4">
    <location>
        <begin position="128"/>
        <end position="136"/>
    </location>
</feature>
<feature type="strand" evidence="4">
    <location>
        <begin position="143"/>
        <end position="145"/>
    </location>
</feature>
<feature type="helix" evidence="4">
    <location>
        <begin position="152"/>
        <end position="154"/>
    </location>
</feature>
<feature type="strand" evidence="4">
    <location>
        <begin position="160"/>
        <end position="162"/>
    </location>
</feature>
<feature type="helix" evidence="4">
    <location>
        <begin position="167"/>
        <end position="190"/>
    </location>
</feature>
<feature type="helix" evidence="4">
    <location>
        <begin position="196"/>
        <end position="216"/>
    </location>
</feature>
<feature type="helix" evidence="4">
    <location>
        <begin position="219"/>
        <end position="227"/>
    </location>
</feature>
<feature type="helix" evidence="4">
    <location>
        <begin position="229"/>
        <end position="238"/>
    </location>
</feature>
<evidence type="ECO:0000269" key="1">
    <source>
    </source>
</evidence>
<evidence type="ECO:0000269" key="2">
    <source>
    </source>
</evidence>
<evidence type="ECO:0000305" key="3"/>
<evidence type="ECO:0007829" key="4">
    <source>
        <dbReference type="PDB" id="2G18"/>
    </source>
</evidence>
<keyword id="KW-0002">3D-structure</keyword>
<keyword id="KW-0560">Oxidoreductase</keyword>
<keyword id="KW-1185">Reference proteome</keyword>
<name>PCYA_NOSS1</name>